<sequence length="156" mass="16885">MNATRKQRLWLVIGVLAAAALAVTLIVFALQRNMSYLFTPSQVRAGEAAGYQQFRLGGMVKAGSIQRAGDSLKVSFIVIDKNAATQVEYTGILPDLFRDNQSVIANGRMQGGRFVANEVLAKHDETYMPKELKDAMAQGHLGKPVPATVAPLTAPR</sequence>
<reference key="1">
    <citation type="journal article" date="2002" name="Nature">
        <title>Comparison of the genomes of two Xanthomonas pathogens with differing host specificities.</title>
        <authorList>
            <person name="da Silva A.C.R."/>
            <person name="Ferro J.A."/>
            <person name="Reinach F.C."/>
            <person name="Farah C.S."/>
            <person name="Furlan L.R."/>
            <person name="Quaggio R.B."/>
            <person name="Monteiro-Vitorello C.B."/>
            <person name="Van Sluys M.A."/>
            <person name="Almeida N.F. Jr."/>
            <person name="Alves L.M.C."/>
            <person name="do Amaral A.M."/>
            <person name="Bertolini M.C."/>
            <person name="Camargo L.E.A."/>
            <person name="Camarotte G."/>
            <person name="Cannavan F."/>
            <person name="Cardozo J."/>
            <person name="Chambergo F."/>
            <person name="Ciapina L.P."/>
            <person name="Cicarelli R.M.B."/>
            <person name="Coutinho L.L."/>
            <person name="Cursino-Santos J.R."/>
            <person name="El-Dorry H."/>
            <person name="Faria J.B."/>
            <person name="Ferreira A.J.S."/>
            <person name="Ferreira R.C.C."/>
            <person name="Ferro M.I.T."/>
            <person name="Formighieri E.F."/>
            <person name="Franco M.C."/>
            <person name="Greggio C.C."/>
            <person name="Gruber A."/>
            <person name="Katsuyama A.M."/>
            <person name="Kishi L.T."/>
            <person name="Leite R.P."/>
            <person name="Lemos E.G.M."/>
            <person name="Lemos M.V.F."/>
            <person name="Locali E.C."/>
            <person name="Machado M.A."/>
            <person name="Madeira A.M.B.N."/>
            <person name="Martinez-Rossi N.M."/>
            <person name="Martins E.C."/>
            <person name="Meidanis J."/>
            <person name="Menck C.F.M."/>
            <person name="Miyaki C.Y."/>
            <person name="Moon D.H."/>
            <person name="Moreira L.M."/>
            <person name="Novo M.T.M."/>
            <person name="Okura V.K."/>
            <person name="Oliveira M.C."/>
            <person name="Oliveira V.R."/>
            <person name="Pereira H.A."/>
            <person name="Rossi A."/>
            <person name="Sena J.A.D."/>
            <person name="Silva C."/>
            <person name="de Souza R.F."/>
            <person name="Spinola L.A.F."/>
            <person name="Takita M.A."/>
            <person name="Tamura R.E."/>
            <person name="Teixeira E.C."/>
            <person name="Tezza R.I.D."/>
            <person name="Trindade dos Santos M."/>
            <person name="Truffi D."/>
            <person name="Tsai S.M."/>
            <person name="White F.F."/>
            <person name="Setubal J.C."/>
            <person name="Kitajima J.P."/>
        </authorList>
    </citation>
    <scope>NUCLEOTIDE SEQUENCE [LARGE SCALE GENOMIC DNA]</scope>
    <source>
        <strain>306</strain>
    </source>
</reference>
<evidence type="ECO:0000255" key="1">
    <source>
        <dbReference type="HAMAP-Rule" id="MF_01959"/>
    </source>
</evidence>
<feature type="chain" id="PRO_0000238879" description="Cytochrome c-type biogenesis protein CcmE 1">
    <location>
        <begin position="1"/>
        <end position="156"/>
    </location>
</feature>
<feature type="topological domain" description="Cytoplasmic" evidence="1">
    <location>
        <begin position="1"/>
        <end position="8"/>
    </location>
</feature>
<feature type="transmembrane region" description="Helical; Signal-anchor for type II membrane protein" evidence="1">
    <location>
        <begin position="9"/>
        <end position="29"/>
    </location>
</feature>
<feature type="topological domain" description="Periplasmic" evidence="1">
    <location>
        <begin position="30"/>
        <end position="156"/>
    </location>
</feature>
<feature type="binding site" description="covalent" evidence="1">
    <location>
        <position position="123"/>
    </location>
    <ligand>
        <name>heme</name>
        <dbReference type="ChEBI" id="CHEBI:30413"/>
    </ligand>
</feature>
<feature type="binding site" description="axial binding residue" evidence="1">
    <location>
        <position position="127"/>
    </location>
    <ligand>
        <name>heme</name>
        <dbReference type="ChEBI" id="CHEBI:30413"/>
    </ligand>
    <ligandPart>
        <name>Fe</name>
        <dbReference type="ChEBI" id="CHEBI:18248"/>
    </ligandPart>
</feature>
<dbReference type="EMBL" id="AE008923">
    <property type="protein sequence ID" value="AAM36544.1"/>
    <property type="molecule type" value="Genomic_DNA"/>
</dbReference>
<dbReference type="SMR" id="Q8PLW2"/>
<dbReference type="KEGG" id="xac:XAC1677"/>
<dbReference type="eggNOG" id="COG2332">
    <property type="taxonomic scope" value="Bacteria"/>
</dbReference>
<dbReference type="HOGENOM" id="CLU_079503_1_1_6"/>
<dbReference type="Proteomes" id="UP000000576">
    <property type="component" value="Chromosome"/>
</dbReference>
<dbReference type="GO" id="GO:0005886">
    <property type="term" value="C:plasma membrane"/>
    <property type="evidence" value="ECO:0007669"/>
    <property type="project" value="UniProtKB-SubCell"/>
</dbReference>
<dbReference type="GO" id="GO:0020037">
    <property type="term" value="F:heme binding"/>
    <property type="evidence" value="ECO:0007669"/>
    <property type="project" value="InterPro"/>
</dbReference>
<dbReference type="GO" id="GO:0046872">
    <property type="term" value="F:metal ion binding"/>
    <property type="evidence" value="ECO:0007669"/>
    <property type="project" value="UniProtKB-KW"/>
</dbReference>
<dbReference type="GO" id="GO:0017004">
    <property type="term" value="P:cytochrome complex assembly"/>
    <property type="evidence" value="ECO:0007669"/>
    <property type="project" value="UniProtKB-KW"/>
</dbReference>
<dbReference type="FunFam" id="2.40.50.140:FF:000104">
    <property type="entry name" value="Cytochrome c-type biogenesis protein CcmE"/>
    <property type="match status" value="1"/>
</dbReference>
<dbReference type="Gene3D" id="2.40.50.140">
    <property type="entry name" value="Nucleic acid-binding proteins"/>
    <property type="match status" value="1"/>
</dbReference>
<dbReference type="HAMAP" id="MF_01959">
    <property type="entry name" value="CcmE"/>
    <property type="match status" value="1"/>
</dbReference>
<dbReference type="InterPro" id="IPR004329">
    <property type="entry name" value="CcmE"/>
</dbReference>
<dbReference type="InterPro" id="IPR036127">
    <property type="entry name" value="CcmE-like_sf"/>
</dbReference>
<dbReference type="InterPro" id="IPR012340">
    <property type="entry name" value="NA-bd_OB-fold"/>
</dbReference>
<dbReference type="NCBIfam" id="NF009637">
    <property type="entry name" value="PRK13159.1"/>
    <property type="match status" value="1"/>
</dbReference>
<dbReference type="NCBIfam" id="NF009727">
    <property type="entry name" value="PRK13254.1-1"/>
    <property type="match status" value="1"/>
</dbReference>
<dbReference type="NCBIfam" id="NF009729">
    <property type="entry name" value="PRK13254.1-3"/>
    <property type="match status" value="1"/>
</dbReference>
<dbReference type="NCBIfam" id="NF009731">
    <property type="entry name" value="PRK13254.1-5"/>
    <property type="match status" value="1"/>
</dbReference>
<dbReference type="PANTHER" id="PTHR34128">
    <property type="entry name" value="CYTOCHROME C-TYPE BIOGENESIS PROTEIN CCME HOMOLOG, MITOCHONDRIAL"/>
    <property type="match status" value="1"/>
</dbReference>
<dbReference type="PANTHER" id="PTHR34128:SF2">
    <property type="entry name" value="CYTOCHROME C-TYPE BIOGENESIS PROTEIN CCME HOMOLOG, MITOCHONDRIAL"/>
    <property type="match status" value="1"/>
</dbReference>
<dbReference type="Pfam" id="PF03100">
    <property type="entry name" value="CcmE"/>
    <property type="match status" value="1"/>
</dbReference>
<dbReference type="SUPFAM" id="SSF82093">
    <property type="entry name" value="Heme chaperone CcmE"/>
    <property type="match status" value="1"/>
</dbReference>
<comment type="function">
    <text evidence="1">Heme chaperone required for the biogenesis of c-type cytochromes. Transiently binds heme delivered by CcmC and transfers the heme to apo-cytochromes in a process facilitated by CcmF and CcmH.</text>
</comment>
<comment type="subcellular location">
    <subcellularLocation>
        <location evidence="1">Cell inner membrane</location>
        <topology evidence="1">Single-pass type II membrane protein</topology>
        <orientation evidence="1">Periplasmic side</orientation>
    </subcellularLocation>
</comment>
<comment type="similarity">
    <text evidence="1">Belongs to the CcmE/CycJ family.</text>
</comment>
<accession>Q8PLW2</accession>
<gene>
    <name evidence="1" type="primary">ccmE1</name>
    <name evidence="1" type="synonym">cycJ1</name>
    <name type="ordered locus">XAC1677</name>
</gene>
<organism>
    <name type="scientific">Xanthomonas axonopodis pv. citri (strain 306)</name>
    <dbReference type="NCBI Taxonomy" id="190486"/>
    <lineage>
        <taxon>Bacteria</taxon>
        <taxon>Pseudomonadati</taxon>
        <taxon>Pseudomonadota</taxon>
        <taxon>Gammaproteobacteria</taxon>
        <taxon>Lysobacterales</taxon>
        <taxon>Lysobacteraceae</taxon>
        <taxon>Xanthomonas</taxon>
    </lineage>
</organism>
<protein>
    <recommendedName>
        <fullName evidence="1">Cytochrome c-type biogenesis protein CcmE 1</fullName>
    </recommendedName>
    <alternativeName>
        <fullName evidence="1">Cytochrome c maturation protein E 1</fullName>
    </alternativeName>
    <alternativeName>
        <fullName evidence="1">Heme chaperone CcmE 1</fullName>
    </alternativeName>
</protein>
<keyword id="KW-0997">Cell inner membrane</keyword>
<keyword id="KW-1003">Cell membrane</keyword>
<keyword id="KW-0201">Cytochrome c-type biogenesis</keyword>
<keyword id="KW-0349">Heme</keyword>
<keyword id="KW-0408">Iron</keyword>
<keyword id="KW-0472">Membrane</keyword>
<keyword id="KW-0479">Metal-binding</keyword>
<keyword id="KW-0735">Signal-anchor</keyword>
<keyword id="KW-0812">Transmembrane</keyword>
<keyword id="KW-1133">Transmembrane helix</keyword>
<name>CCME1_XANAC</name>
<proteinExistence type="inferred from homology"/>